<keyword id="KW-0001">2Fe-2S</keyword>
<keyword id="KW-0004">4Fe-4S</keyword>
<keyword id="KW-0093">Biotin biosynthesis</keyword>
<keyword id="KW-0408">Iron</keyword>
<keyword id="KW-0411">Iron-sulfur</keyword>
<keyword id="KW-0479">Metal-binding</keyword>
<keyword id="KW-0949">S-adenosyl-L-methionine</keyword>
<keyword id="KW-0808">Transferase</keyword>
<accession>A2BX80</accession>
<protein>
    <recommendedName>
        <fullName evidence="1">Biotin synthase</fullName>
        <ecNumber evidence="1">2.8.1.6</ecNumber>
    </recommendedName>
</protein>
<name>BIOB_PROM5</name>
<evidence type="ECO:0000255" key="1">
    <source>
        <dbReference type="HAMAP-Rule" id="MF_01694"/>
    </source>
</evidence>
<evidence type="ECO:0000255" key="2">
    <source>
        <dbReference type="PROSITE-ProRule" id="PRU01266"/>
    </source>
</evidence>
<organism>
    <name type="scientific">Prochlorococcus marinus (strain MIT 9515)</name>
    <dbReference type="NCBI Taxonomy" id="167542"/>
    <lineage>
        <taxon>Bacteria</taxon>
        <taxon>Bacillati</taxon>
        <taxon>Cyanobacteriota</taxon>
        <taxon>Cyanophyceae</taxon>
        <taxon>Synechococcales</taxon>
        <taxon>Prochlorococcaceae</taxon>
        <taxon>Prochlorococcus</taxon>
    </lineage>
</organism>
<gene>
    <name evidence="1" type="primary">bioB</name>
    <name type="ordered locus">P9515_11841</name>
</gene>
<feature type="chain" id="PRO_0000381541" description="Biotin synthase">
    <location>
        <begin position="1"/>
        <end position="335"/>
    </location>
</feature>
<feature type="domain" description="Radical SAM core" evidence="2">
    <location>
        <begin position="46"/>
        <end position="274"/>
    </location>
</feature>
<feature type="binding site" evidence="1">
    <location>
        <position position="61"/>
    </location>
    <ligand>
        <name>[4Fe-4S] cluster</name>
        <dbReference type="ChEBI" id="CHEBI:49883"/>
        <note>4Fe-4S-S-AdoMet</note>
    </ligand>
</feature>
<feature type="binding site" evidence="1">
    <location>
        <position position="65"/>
    </location>
    <ligand>
        <name>[4Fe-4S] cluster</name>
        <dbReference type="ChEBI" id="CHEBI:49883"/>
        <note>4Fe-4S-S-AdoMet</note>
    </ligand>
</feature>
<feature type="binding site" evidence="1">
    <location>
        <position position="68"/>
    </location>
    <ligand>
        <name>[4Fe-4S] cluster</name>
        <dbReference type="ChEBI" id="CHEBI:49883"/>
        <note>4Fe-4S-S-AdoMet</note>
    </ligand>
</feature>
<feature type="binding site" evidence="1">
    <location>
        <position position="105"/>
    </location>
    <ligand>
        <name>[2Fe-2S] cluster</name>
        <dbReference type="ChEBI" id="CHEBI:190135"/>
    </ligand>
</feature>
<feature type="binding site" evidence="1">
    <location>
        <position position="137"/>
    </location>
    <ligand>
        <name>[2Fe-2S] cluster</name>
        <dbReference type="ChEBI" id="CHEBI:190135"/>
    </ligand>
</feature>
<feature type="binding site" evidence="1">
    <location>
        <position position="197"/>
    </location>
    <ligand>
        <name>[2Fe-2S] cluster</name>
        <dbReference type="ChEBI" id="CHEBI:190135"/>
    </ligand>
</feature>
<feature type="binding site" evidence="1">
    <location>
        <position position="269"/>
    </location>
    <ligand>
        <name>[2Fe-2S] cluster</name>
        <dbReference type="ChEBI" id="CHEBI:190135"/>
    </ligand>
</feature>
<comment type="function">
    <text evidence="1">Catalyzes the conversion of dethiobiotin (DTB) to biotin by the insertion of a sulfur atom into dethiobiotin via a radical-based mechanism.</text>
</comment>
<comment type="catalytic activity">
    <reaction evidence="1">
        <text>(4R,5S)-dethiobiotin + (sulfur carrier)-SH + 2 reduced [2Fe-2S]-[ferredoxin] + 2 S-adenosyl-L-methionine = (sulfur carrier)-H + biotin + 2 5'-deoxyadenosine + 2 L-methionine + 2 oxidized [2Fe-2S]-[ferredoxin]</text>
        <dbReference type="Rhea" id="RHEA:22060"/>
        <dbReference type="Rhea" id="RHEA-COMP:10000"/>
        <dbReference type="Rhea" id="RHEA-COMP:10001"/>
        <dbReference type="Rhea" id="RHEA-COMP:14737"/>
        <dbReference type="Rhea" id="RHEA-COMP:14739"/>
        <dbReference type="ChEBI" id="CHEBI:17319"/>
        <dbReference type="ChEBI" id="CHEBI:29917"/>
        <dbReference type="ChEBI" id="CHEBI:33737"/>
        <dbReference type="ChEBI" id="CHEBI:33738"/>
        <dbReference type="ChEBI" id="CHEBI:57586"/>
        <dbReference type="ChEBI" id="CHEBI:57844"/>
        <dbReference type="ChEBI" id="CHEBI:59789"/>
        <dbReference type="ChEBI" id="CHEBI:64428"/>
        <dbReference type="ChEBI" id="CHEBI:149473"/>
        <dbReference type="EC" id="2.8.1.6"/>
    </reaction>
</comment>
<comment type="cofactor">
    <cofactor evidence="1">
        <name>[4Fe-4S] cluster</name>
        <dbReference type="ChEBI" id="CHEBI:49883"/>
    </cofactor>
    <text evidence="1">Binds 1 [4Fe-4S] cluster. The cluster is coordinated with 3 cysteines and an exchangeable S-adenosyl-L-methionine.</text>
</comment>
<comment type="cofactor">
    <cofactor evidence="1">
        <name>[2Fe-2S] cluster</name>
        <dbReference type="ChEBI" id="CHEBI:190135"/>
    </cofactor>
    <text evidence="1">Binds 1 [2Fe-2S] cluster. The cluster is coordinated with 3 cysteines and 1 arginine.</text>
</comment>
<comment type="pathway">
    <text evidence="1">Cofactor biosynthesis; biotin biosynthesis; biotin from 7,8-diaminononanoate: step 2/2.</text>
</comment>
<comment type="subunit">
    <text evidence="1">Homodimer.</text>
</comment>
<comment type="similarity">
    <text evidence="1">Belongs to the radical SAM superfamily. Biotin synthase family.</text>
</comment>
<dbReference type="EC" id="2.8.1.6" evidence="1"/>
<dbReference type="EMBL" id="CP000552">
    <property type="protein sequence ID" value="ABM72391.1"/>
    <property type="molecule type" value="Genomic_DNA"/>
</dbReference>
<dbReference type="RefSeq" id="WP_011820491.1">
    <property type="nucleotide sequence ID" value="NC_008817.1"/>
</dbReference>
<dbReference type="SMR" id="A2BX80"/>
<dbReference type="STRING" id="167542.P9515_11841"/>
<dbReference type="GeneID" id="60200848"/>
<dbReference type="KEGG" id="pmc:P9515_11841"/>
<dbReference type="eggNOG" id="COG0502">
    <property type="taxonomic scope" value="Bacteria"/>
</dbReference>
<dbReference type="HOGENOM" id="CLU_033172_1_2_3"/>
<dbReference type="OrthoDB" id="9786826at2"/>
<dbReference type="UniPathway" id="UPA00078">
    <property type="reaction ID" value="UER00162"/>
</dbReference>
<dbReference type="Proteomes" id="UP000001589">
    <property type="component" value="Chromosome"/>
</dbReference>
<dbReference type="GO" id="GO:0051537">
    <property type="term" value="F:2 iron, 2 sulfur cluster binding"/>
    <property type="evidence" value="ECO:0007669"/>
    <property type="project" value="UniProtKB-KW"/>
</dbReference>
<dbReference type="GO" id="GO:0051539">
    <property type="term" value="F:4 iron, 4 sulfur cluster binding"/>
    <property type="evidence" value="ECO:0007669"/>
    <property type="project" value="UniProtKB-KW"/>
</dbReference>
<dbReference type="GO" id="GO:0004076">
    <property type="term" value="F:biotin synthase activity"/>
    <property type="evidence" value="ECO:0007669"/>
    <property type="project" value="UniProtKB-UniRule"/>
</dbReference>
<dbReference type="GO" id="GO:0005506">
    <property type="term" value="F:iron ion binding"/>
    <property type="evidence" value="ECO:0007669"/>
    <property type="project" value="UniProtKB-UniRule"/>
</dbReference>
<dbReference type="GO" id="GO:0009102">
    <property type="term" value="P:biotin biosynthetic process"/>
    <property type="evidence" value="ECO:0007669"/>
    <property type="project" value="UniProtKB-UniRule"/>
</dbReference>
<dbReference type="CDD" id="cd01335">
    <property type="entry name" value="Radical_SAM"/>
    <property type="match status" value="1"/>
</dbReference>
<dbReference type="Gene3D" id="3.20.20.70">
    <property type="entry name" value="Aldolase class I"/>
    <property type="match status" value="1"/>
</dbReference>
<dbReference type="HAMAP" id="MF_01694">
    <property type="entry name" value="BioB"/>
    <property type="match status" value="1"/>
</dbReference>
<dbReference type="InterPro" id="IPR013785">
    <property type="entry name" value="Aldolase_TIM"/>
</dbReference>
<dbReference type="InterPro" id="IPR010722">
    <property type="entry name" value="BATS_dom"/>
</dbReference>
<dbReference type="InterPro" id="IPR002684">
    <property type="entry name" value="Biotin_synth/BioAB"/>
</dbReference>
<dbReference type="InterPro" id="IPR024177">
    <property type="entry name" value="Biotin_synthase"/>
</dbReference>
<dbReference type="InterPro" id="IPR006638">
    <property type="entry name" value="Elp3/MiaA/NifB-like_rSAM"/>
</dbReference>
<dbReference type="InterPro" id="IPR007197">
    <property type="entry name" value="rSAM"/>
</dbReference>
<dbReference type="NCBIfam" id="TIGR00433">
    <property type="entry name" value="bioB"/>
    <property type="match status" value="1"/>
</dbReference>
<dbReference type="PANTHER" id="PTHR22976">
    <property type="entry name" value="BIOTIN SYNTHASE"/>
    <property type="match status" value="1"/>
</dbReference>
<dbReference type="PANTHER" id="PTHR22976:SF2">
    <property type="entry name" value="BIOTIN SYNTHASE, MITOCHONDRIAL"/>
    <property type="match status" value="1"/>
</dbReference>
<dbReference type="Pfam" id="PF06968">
    <property type="entry name" value="BATS"/>
    <property type="match status" value="1"/>
</dbReference>
<dbReference type="Pfam" id="PF04055">
    <property type="entry name" value="Radical_SAM"/>
    <property type="match status" value="1"/>
</dbReference>
<dbReference type="PIRSF" id="PIRSF001619">
    <property type="entry name" value="Biotin_synth"/>
    <property type="match status" value="1"/>
</dbReference>
<dbReference type="SFLD" id="SFLDG01060">
    <property type="entry name" value="BATS_domain_containing"/>
    <property type="match status" value="1"/>
</dbReference>
<dbReference type="SFLD" id="SFLDF00272">
    <property type="entry name" value="biotin_synthase"/>
    <property type="match status" value="1"/>
</dbReference>
<dbReference type="SMART" id="SM00876">
    <property type="entry name" value="BATS"/>
    <property type="match status" value="1"/>
</dbReference>
<dbReference type="SMART" id="SM00729">
    <property type="entry name" value="Elp3"/>
    <property type="match status" value="1"/>
</dbReference>
<dbReference type="SUPFAM" id="SSF102114">
    <property type="entry name" value="Radical SAM enzymes"/>
    <property type="match status" value="1"/>
</dbReference>
<dbReference type="PROSITE" id="PS51918">
    <property type="entry name" value="RADICAL_SAM"/>
    <property type="match status" value="1"/>
</dbReference>
<reference key="1">
    <citation type="journal article" date="2007" name="PLoS Genet.">
        <title>Patterns and implications of gene gain and loss in the evolution of Prochlorococcus.</title>
        <authorList>
            <person name="Kettler G.C."/>
            <person name="Martiny A.C."/>
            <person name="Huang K."/>
            <person name="Zucker J."/>
            <person name="Coleman M.L."/>
            <person name="Rodrigue S."/>
            <person name="Chen F."/>
            <person name="Lapidus A."/>
            <person name="Ferriera S."/>
            <person name="Johnson J."/>
            <person name="Steglich C."/>
            <person name="Church G.M."/>
            <person name="Richardson P."/>
            <person name="Chisholm S.W."/>
        </authorList>
    </citation>
    <scope>NUCLEOTIDE SEQUENCE [LARGE SCALE GENOMIC DNA]</scope>
    <source>
        <strain>MIT 9515</strain>
    </source>
</reference>
<sequence>MINSDNQKFSKIRFDWARDEILEILNYPLVDLMWEAQIIHRRFNEYKVQLASLFSVKTGGCEENCSYCSQSIYSSSQIKSHPQFEVEAVLNRAKTAKKEGADRFCMGWAWREIRDGKPFNSMLEMVKGVKELGMEACVTAGMLTDEQALRLADAGLTAYNHNLDTSPEYYKNIITTRTYQDRLETIKRVRNAGINVCCGGIIGLGENNGDRASLLEVLSNMNPHPESVPINSLVAIEGTGLEEKKEIDSIEMIRMIATARILMPKSKIRLSAGREKLTKEAQIICFQCGANSIFYGDELLTTSNPSFQDDRKLLKDVGVLFNKDFEYCDKTVSTV</sequence>
<proteinExistence type="inferred from homology"/>